<feature type="chain" id="PRO_0000113329" description="Malate dehydrogenase">
    <location>
        <begin position="1"/>
        <end position="311"/>
    </location>
</feature>
<feature type="active site" description="Proton acceptor" evidence="1">
    <location>
        <position position="177"/>
    </location>
</feature>
<feature type="binding site" evidence="1">
    <location>
        <begin position="7"/>
        <end position="13"/>
    </location>
    <ligand>
        <name>NAD(+)</name>
        <dbReference type="ChEBI" id="CHEBI:57540"/>
    </ligand>
</feature>
<feature type="binding site" evidence="1">
    <location>
        <position position="34"/>
    </location>
    <ligand>
        <name>NAD(+)</name>
        <dbReference type="ChEBI" id="CHEBI:57540"/>
    </ligand>
</feature>
<feature type="binding site" evidence="1">
    <location>
        <position position="81"/>
    </location>
    <ligand>
        <name>substrate</name>
    </ligand>
</feature>
<feature type="binding site" evidence="1">
    <location>
        <position position="87"/>
    </location>
    <ligand>
        <name>substrate</name>
    </ligand>
</feature>
<feature type="binding site" evidence="1">
    <location>
        <position position="94"/>
    </location>
    <ligand>
        <name>NAD(+)</name>
        <dbReference type="ChEBI" id="CHEBI:57540"/>
    </ligand>
</feature>
<feature type="binding site" evidence="1">
    <location>
        <begin position="117"/>
        <end position="119"/>
    </location>
    <ligand>
        <name>NAD(+)</name>
        <dbReference type="ChEBI" id="CHEBI:57540"/>
    </ligand>
</feature>
<feature type="binding site" evidence="1">
    <location>
        <position position="119"/>
    </location>
    <ligand>
        <name>substrate</name>
    </ligand>
</feature>
<feature type="binding site" evidence="1">
    <location>
        <position position="153"/>
    </location>
    <ligand>
        <name>substrate</name>
    </ligand>
</feature>
<feature type="binding site" evidence="1">
    <location>
        <position position="227"/>
    </location>
    <ligand>
        <name>NAD(+)</name>
        <dbReference type="ChEBI" id="CHEBI:57540"/>
    </ligand>
</feature>
<comment type="function">
    <text evidence="1">Catalyzes the reversible oxidation of malate to oxaloacetate.</text>
</comment>
<comment type="catalytic activity">
    <reaction evidence="1">
        <text>(S)-malate + NAD(+) = oxaloacetate + NADH + H(+)</text>
        <dbReference type="Rhea" id="RHEA:21432"/>
        <dbReference type="ChEBI" id="CHEBI:15378"/>
        <dbReference type="ChEBI" id="CHEBI:15589"/>
        <dbReference type="ChEBI" id="CHEBI:16452"/>
        <dbReference type="ChEBI" id="CHEBI:57540"/>
        <dbReference type="ChEBI" id="CHEBI:57945"/>
        <dbReference type="EC" id="1.1.1.37"/>
    </reaction>
</comment>
<comment type="subunit">
    <text evidence="1">Homodimer.</text>
</comment>
<comment type="similarity">
    <text evidence="1">Belongs to the LDH/MDH superfamily. MDH type 1 family.</text>
</comment>
<name>MDH_ALIF1</name>
<keyword id="KW-0520">NAD</keyword>
<keyword id="KW-0560">Oxidoreductase</keyword>
<keyword id="KW-1185">Reference proteome</keyword>
<keyword id="KW-0816">Tricarboxylic acid cycle</keyword>
<reference key="1">
    <citation type="journal article" date="2005" name="Proc. Natl. Acad. Sci. U.S.A.">
        <title>Complete genome sequence of Vibrio fischeri: a symbiotic bacterium with pathogenic congeners.</title>
        <authorList>
            <person name="Ruby E.G."/>
            <person name="Urbanowski M."/>
            <person name="Campbell J."/>
            <person name="Dunn A."/>
            <person name="Faini M."/>
            <person name="Gunsalus R."/>
            <person name="Lostroh P."/>
            <person name="Lupp C."/>
            <person name="McCann J."/>
            <person name="Millikan D."/>
            <person name="Schaefer A."/>
            <person name="Stabb E."/>
            <person name="Stevens A."/>
            <person name="Visick K."/>
            <person name="Whistler C."/>
            <person name="Greenberg E.P."/>
        </authorList>
    </citation>
    <scope>NUCLEOTIDE SEQUENCE [LARGE SCALE GENOMIC DNA]</scope>
    <source>
        <strain>ATCC 700601 / ES114</strain>
    </source>
</reference>
<protein>
    <recommendedName>
        <fullName evidence="1">Malate dehydrogenase</fullName>
        <ecNumber evidence="1">1.1.1.37</ecNumber>
    </recommendedName>
</protein>
<proteinExistence type="inferred from homology"/>
<accession>Q5E875</accession>
<gene>
    <name evidence="1" type="primary">mdh</name>
    <name type="ordered locus">VF_0276</name>
</gene>
<dbReference type="EC" id="1.1.1.37" evidence="1"/>
<dbReference type="EMBL" id="CP000020">
    <property type="protein sequence ID" value="AAW84771.1"/>
    <property type="molecule type" value="Genomic_DNA"/>
</dbReference>
<dbReference type="RefSeq" id="WP_005417301.1">
    <property type="nucleotide sequence ID" value="NC_006840.2"/>
</dbReference>
<dbReference type="RefSeq" id="YP_203659.1">
    <property type="nucleotide sequence ID" value="NC_006840.2"/>
</dbReference>
<dbReference type="SMR" id="Q5E875"/>
<dbReference type="STRING" id="312309.VF_0276"/>
<dbReference type="EnsemblBacteria" id="AAW84771">
    <property type="protein sequence ID" value="AAW84771"/>
    <property type="gene ID" value="VF_0276"/>
</dbReference>
<dbReference type="GeneID" id="54162897"/>
<dbReference type="KEGG" id="vfi:VF_0276"/>
<dbReference type="PATRIC" id="fig|312309.11.peg.271"/>
<dbReference type="eggNOG" id="COG0039">
    <property type="taxonomic scope" value="Bacteria"/>
</dbReference>
<dbReference type="HOGENOM" id="CLU_047181_1_0_6"/>
<dbReference type="OrthoDB" id="9802969at2"/>
<dbReference type="Proteomes" id="UP000000537">
    <property type="component" value="Chromosome I"/>
</dbReference>
<dbReference type="GO" id="GO:0005737">
    <property type="term" value="C:cytoplasm"/>
    <property type="evidence" value="ECO:0007669"/>
    <property type="project" value="TreeGrafter"/>
</dbReference>
<dbReference type="GO" id="GO:0030060">
    <property type="term" value="F:L-malate dehydrogenase (NAD+) activity"/>
    <property type="evidence" value="ECO:0007669"/>
    <property type="project" value="UniProtKB-UniRule"/>
</dbReference>
<dbReference type="GO" id="GO:0006108">
    <property type="term" value="P:malate metabolic process"/>
    <property type="evidence" value="ECO:0007669"/>
    <property type="project" value="InterPro"/>
</dbReference>
<dbReference type="GO" id="GO:0006099">
    <property type="term" value="P:tricarboxylic acid cycle"/>
    <property type="evidence" value="ECO:0007669"/>
    <property type="project" value="UniProtKB-UniRule"/>
</dbReference>
<dbReference type="CDD" id="cd01337">
    <property type="entry name" value="MDH_glyoxysomal_mitochondrial"/>
    <property type="match status" value="1"/>
</dbReference>
<dbReference type="FunFam" id="3.40.50.720:FF:000017">
    <property type="entry name" value="Malate dehydrogenase"/>
    <property type="match status" value="1"/>
</dbReference>
<dbReference type="FunFam" id="3.90.110.10:FF:000001">
    <property type="entry name" value="Malate dehydrogenase"/>
    <property type="match status" value="1"/>
</dbReference>
<dbReference type="Gene3D" id="3.90.110.10">
    <property type="entry name" value="Lactate dehydrogenase/glycoside hydrolase, family 4, C-terminal"/>
    <property type="match status" value="1"/>
</dbReference>
<dbReference type="Gene3D" id="3.40.50.720">
    <property type="entry name" value="NAD(P)-binding Rossmann-like Domain"/>
    <property type="match status" value="1"/>
</dbReference>
<dbReference type="HAMAP" id="MF_01516">
    <property type="entry name" value="Malate_dehydrog_1"/>
    <property type="match status" value="1"/>
</dbReference>
<dbReference type="InterPro" id="IPR001557">
    <property type="entry name" value="L-lactate/malate_DH"/>
</dbReference>
<dbReference type="InterPro" id="IPR022383">
    <property type="entry name" value="Lactate/malate_DH_C"/>
</dbReference>
<dbReference type="InterPro" id="IPR001236">
    <property type="entry name" value="Lactate/malate_DH_N"/>
</dbReference>
<dbReference type="InterPro" id="IPR015955">
    <property type="entry name" value="Lactate_DH/Glyco_Ohase_4_C"/>
</dbReference>
<dbReference type="InterPro" id="IPR001252">
    <property type="entry name" value="Malate_DH_AS"/>
</dbReference>
<dbReference type="InterPro" id="IPR010097">
    <property type="entry name" value="Malate_DH_type1"/>
</dbReference>
<dbReference type="InterPro" id="IPR023958">
    <property type="entry name" value="Malate_DH_type1_bac"/>
</dbReference>
<dbReference type="InterPro" id="IPR036291">
    <property type="entry name" value="NAD(P)-bd_dom_sf"/>
</dbReference>
<dbReference type="NCBIfam" id="TIGR01772">
    <property type="entry name" value="MDH_euk_gproteo"/>
    <property type="match status" value="1"/>
</dbReference>
<dbReference type="PANTHER" id="PTHR11540">
    <property type="entry name" value="MALATE AND LACTATE DEHYDROGENASE"/>
    <property type="match status" value="1"/>
</dbReference>
<dbReference type="PANTHER" id="PTHR11540:SF16">
    <property type="entry name" value="MALATE DEHYDROGENASE, MITOCHONDRIAL"/>
    <property type="match status" value="1"/>
</dbReference>
<dbReference type="Pfam" id="PF02866">
    <property type="entry name" value="Ldh_1_C"/>
    <property type="match status" value="1"/>
</dbReference>
<dbReference type="Pfam" id="PF00056">
    <property type="entry name" value="Ldh_1_N"/>
    <property type="match status" value="1"/>
</dbReference>
<dbReference type="PIRSF" id="PIRSF000102">
    <property type="entry name" value="Lac_mal_DH"/>
    <property type="match status" value="1"/>
</dbReference>
<dbReference type="SUPFAM" id="SSF56327">
    <property type="entry name" value="LDH C-terminal domain-like"/>
    <property type="match status" value="1"/>
</dbReference>
<dbReference type="SUPFAM" id="SSF51735">
    <property type="entry name" value="NAD(P)-binding Rossmann-fold domains"/>
    <property type="match status" value="1"/>
</dbReference>
<dbReference type="PROSITE" id="PS00068">
    <property type="entry name" value="MDH"/>
    <property type="match status" value="1"/>
</dbReference>
<evidence type="ECO:0000255" key="1">
    <source>
        <dbReference type="HAMAP-Rule" id="MF_01516"/>
    </source>
</evidence>
<organism>
    <name type="scientific">Aliivibrio fischeri (strain ATCC 700601 / ES114)</name>
    <name type="common">Vibrio fischeri</name>
    <dbReference type="NCBI Taxonomy" id="312309"/>
    <lineage>
        <taxon>Bacteria</taxon>
        <taxon>Pseudomonadati</taxon>
        <taxon>Pseudomonadota</taxon>
        <taxon>Gammaproteobacteria</taxon>
        <taxon>Vibrionales</taxon>
        <taxon>Vibrionaceae</taxon>
        <taxon>Aliivibrio</taxon>
    </lineage>
</organism>
<sequence>MKVAVIGAAGGIGQALALLLKNRLPAGSDLALYDIAPVTPGVAADLSHIPTPVSIKGYCGEDPTPALEGADVVLISAGVARKPGMDRSDLFNINAGIVKSLTEKIAVTCPKACIGIITNPVNTTVAIAAEVLKKAGVYDKNKLFGVTTLDVIRSETFVAELKDKDPGEIRVPVIGGHSGVTILPLLSQVQGVEFTAEEVAALTPRIQNAGTEVVEAKAGGGSATLSMGQAACRFGLSLVKALSGEEGVVECAYVEGNGEHARFFAQPILLGKNGVEEIQSYGELSAFEQEALESMLDTLRGDIKIGEEFVQ</sequence>